<name>TRPC_BACLD</name>
<accession>Q65I33</accession>
<accession>Q62TI2</accession>
<reference key="1">
    <citation type="journal article" date="2004" name="J. Mol. Microbiol. Biotechnol.">
        <title>The complete genome sequence of Bacillus licheniformis DSM13, an organism with great industrial potential.</title>
        <authorList>
            <person name="Veith B."/>
            <person name="Herzberg C."/>
            <person name="Steckel S."/>
            <person name="Feesche J."/>
            <person name="Maurer K.H."/>
            <person name="Ehrenreich P."/>
            <person name="Baeumer S."/>
            <person name="Henne A."/>
            <person name="Liesegang H."/>
            <person name="Merkl R."/>
            <person name="Ehrenreich A."/>
            <person name="Gottschalk G."/>
        </authorList>
    </citation>
    <scope>NUCLEOTIDE SEQUENCE [LARGE SCALE GENOMIC DNA]</scope>
    <source>
        <strain>ATCC 14580 / DSM 13 / JCM 2505 / CCUG 7422 / NBRC 12200 / NCIMB 9375 / NCTC 10341 / NRRL NRS-1264 / Gibson 46</strain>
    </source>
</reference>
<reference key="2">
    <citation type="journal article" date="2004" name="Genome Biol.">
        <title>Complete genome sequence of the industrial bacterium Bacillus licheniformis and comparisons with closely related Bacillus species.</title>
        <authorList>
            <person name="Rey M.W."/>
            <person name="Ramaiya P."/>
            <person name="Nelson B.A."/>
            <person name="Brody-Karpin S.D."/>
            <person name="Zaretsky E.J."/>
            <person name="Tang M."/>
            <person name="Lopez de Leon A."/>
            <person name="Xiang H."/>
            <person name="Gusti V."/>
            <person name="Clausen I.G."/>
            <person name="Olsen P.B."/>
            <person name="Rasmussen M.D."/>
            <person name="Andersen J.T."/>
            <person name="Joergensen P.L."/>
            <person name="Larsen T.S."/>
            <person name="Sorokin A."/>
            <person name="Bolotin A."/>
            <person name="Lapidus A."/>
            <person name="Galleron N."/>
            <person name="Ehrlich S.D."/>
            <person name="Berka R.M."/>
        </authorList>
    </citation>
    <scope>NUCLEOTIDE SEQUENCE [LARGE SCALE GENOMIC DNA]</scope>
    <source>
        <strain>ATCC 14580 / DSM 13 / JCM 2505 / CCUG 7422 / NBRC 12200 / NCIMB 9375 / NCTC 10341 / NRRL NRS-1264 / Gibson 46</strain>
    </source>
</reference>
<organism>
    <name type="scientific">Bacillus licheniformis (strain ATCC 14580 / DSM 13 / JCM 2505 / CCUG 7422 / NBRC 12200 / NCIMB 9375 / NCTC 10341 / NRRL NRS-1264 / Gibson 46)</name>
    <dbReference type="NCBI Taxonomy" id="279010"/>
    <lineage>
        <taxon>Bacteria</taxon>
        <taxon>Bacillati</taxon>
        <taxon>Bacillota</taxon>
        <taxon>Bacilli</taxon>
        <taxon>Bacillales</taxon>
        <taxon>Bacillaceae</taxon>
        <taxon>Bacillus</taxon>
    </lineage>
</organism>
<evidence type="ECO:0000255" key="1">
    <source>
        <dbReference type="HAMAP-Rule" id="MF_00134"/>
    </source>
</evidence>
<gene>
    <name evidence="1" type="primary">trpC</name>
    <name type="ordered locus">BLi02401</name>
    <name type="ordered locus">BL02773</name>
</gene>
<proteinExistence type="inferred from homology"/>
<dbReference type="EC" id="4.1.1.48" evidence="1"/>
<dbReference type="EMBL" id="CP000002">
    <property type="protein sequence ID" value="AAU23927.1"/>
    <property type="molecule type" value="Genomic_DNA"/>
</dbReference>
<dbReference type="EMBL" id="AE017333">
    <property type="protein sequence ID" value="AAU41281.1"/>
    <property type="molecule type" value="Genomic_DNA"/>
</dbReference>
<dbReference type="RefSeq" id="WP_011198070.1">
    <property type="nucleotide sequence ID" value="NC_006322.1"/>
</dbReference>
<dbReference type="SMR" id="Q65I33"/>
<dbReference type="STRING" id="279010.BL02773"/>
<dbReference type="GeneID" id="92860999"/>
<dbReference type="KEGG" id="bld:BLi02401"/>
<dbReference type="KEGG" id="bli:BL02773"/>
<dbReference type="PATRIC" id="fig|279010.13.peg.2432"/>
<dbReference type="eggNOG" id="COG0134">
    <property type="taxonomic scope" value="Bacteria"/>
</dbReference>
<dbReference type="HOGENOM" id="CLU_034247_2_0_9"/>
<dbReference type="UniPathway" id="UPA00035">
    <property type="reaction ID" value="UER00043"/>
</dbReference>
<dbReference type="Proteomes" id="UP000000606">
    <property type="component" value="Chromosome"/>
</dbReference>
<dbReference type="Bgee" id="BL02773">
    <property type="expression patterns" value="Expressed in gastrula and 7 other cell types or tissues"/>
</dbReference>
<dbReference type="GO" id="GO:0004425">
    <property type="term" value="F:indole-3-glycerol-phosphate synthase activity"/>
    <property type="evidence" value="ECO:0007669"/>
    <property type="project" value="UniProtKB-UniRule"/>
</dbReference>
<dbReference type="GO" id="GO:0004640">
    <property type="term" value="F:phosphoribosylanthranilate isomerase activity"/>
    <property type="evidence" value="ECO:0007669"/>
    <property type="project" value="TreeGrafter"/>
</dbReference>
<dbReference type="GO" id="GO:0000162">
    <property type="term" value="P:L-tryptophan biosynthetic process"/>
    <property type="evidence" value="ECO:0007669"/>
    <property type="project" value="UniProtKB-UniRule"/>
</dbReference>
<dbReference type="CDD" id="cd00331">
    <property type="entry name" value="IGPS"/>
    <property type="match status" value="1"/>
</dbReference>
<dbReference type="FunFam" id="3.20.20.70:FF:000024">
    <property type="entry name" value="Indole-3-glycerol phosphate synthase"/>
    <property type="match status" value="1"/>
</dbReference>
<dbReference type="Gene3D" id="3.20.20.70">
    <property type="entry name" value="Aldolase class I"/>
    <property type="match status" value="1"/>
</dbReference>
<dbReference type="HAMAP" id="MF_00134_B">
    <property type="entry name" value="IGPS_B"/>
    <property type="match status" value="1"/>
</dbReference>
<dbReference type="InterPro" id="IPR013785">
    <property type="entry name" value="Aldolase_TIM"/>
</dbReference>
<dbReference type="InterPro" id="IPR045186">
    <property type="entry name" value="Indole-3-glycerol_P_synth"/>
</dbReference>
<dbReference type="InterPro" id="IPR013798">
    <property type="entry name" value="Indole-3-glycerol_P_synth_dom"/>
</dbReference>
<dbReference type="InterPro" id="IPR001468">
    <property type="entry name" value="Indole-3-GlycerolPSynthase_CS"/>
</dbReference>
<dbReference type="InterPro" id="IPR011060">
    <property type="entry name" value="RibuloseP-bd_barrel"/>
</dbReference>
<dbReference type="NCBIfam" id="NF001375">
    <property type="entry name" value="PRK00278.2-2"/>
    <property type="match status" value="1"/>
</dbReference>
<dbReference type="NCBIfam" id="NF001377">
    <property type="entry name" value="PRK00278.2-4"/>
    <property type="match status" value="1"/>
</dbReference>
<dbReference type="PANTHER" id="PTHR22854:SF2">
    <property type="entry name" value="INDOLE-3-GLYCEROL-PHOSPHATE SYNTHASE"/>
    <property type="match status" value="1"/>
</dbReference>
<dbReference type="PANTHER" id="PTHR22854">
    <property type="entry name" value="TRYPTOPHAN BIOSYNTHESIS PROTEIN"/>
    <property type="match status" value="1"/>
</dbReference>
<dbReference type="Pfam" id="PF00218">
    <property type="entry name" value="IGPS"/>
    <property type="match status" value="1"/>
</dbReference>
<dbReference type="SUPFAM" id="SSF51366">
    <property type="entry name" value="Ribulose-phoshate binding barrel"/>
    <property type="match status" value="1"/>
</dbReference>
<dbReference type="PROSITE" id="PS00614">
    <property type="entry name" value="IGPS"/>
    <property type="match status" value="1"/>
</dbReference>
<comment type="catalytic activity">
    <reaction evidence="1">
        <text>1-(2-carboxyphenylamino)-1-deoxy-D-ribulose 5-phosphate + H(+) = (1S,2R)-1-C-(indol-3-yl)glycerol 3-phosphate + CO2 + H2O</text>
        <dbReference type="Rhea" id="RHEA:23476"/>
        <dbReference type="ChEBI" id="CHEBI:15377"/>
        <dbReference type="ChEBI" id="CHEBI:15378"/>
        <dbReference type="ChEBI" id="CHEBI:16526"/>
        <dbReference type="ChEBI" id="CHEBI:58613"/>
        <dbReference type="ChEBI" id="CHEBI:58866"/>
        <dbReference type="EC" id="4.1.1.48"/>
    </reaction>
</comment>
<comment type="pathway">
    <text evidence="1">Amino-acid biosynthesis; L-tryptophan biosynthesis; L-tryptophan from chorismate: step 4/5.</text>
</comment>
<comment type="similarity">
    <text evidence="1">Belongs to the TrpC family.</text>
</comment>
<sequence length="252" mass="27867">MLNQIIDRKREDILKIKLSEDLKLPKRSFKKALLSPNRFVALIAEVKKASPSKGVIQEGFEPVKIAKQYEQAKADCLSVLTDTPFFQGKNSYLSDVKRSVSLPVLRKDFIIDSIQVEEADRIGADAILLIGEALEPQKLFELYQQAVEKGMDVLVEVHGEETLEGILNVFTPEIIGVNNRNLKNFETTVGQTERMAKLVPPGTVLISESGIGKSEDLTFVKTCGAQAVLVGESLMRETSQLKAVYALFGEDG</sequence>
<protein>
    <recommendedName>
        <fullName evidence="1">Indole-3-glycerol phosphate synthase</fullName>
        <shortName evidence="1">IGPS</shortName>
        <ecNumber evidence="1">4.1.1.48</ecNumber>
    </recommendedName>
</protein>
<feature type="chain" id="PRO_1000018440" description="Indole-3-glycerol phosphate synthase">
    <location>
        <begin position="1"/>
        <end position="252"/>
    </location>
</feature>
<keyword id="KW-0028">Amino-acid biosynthesis</keyword>
<keyword id="KW-0057">Aromatic amino acid biosynthesis</keyword>
<keyword id="KW-0210">Decarboxylase</keyword>
<keyword id="KW-0456">Lyase</keyword>
<keyword id="KW-1185">Reference proteome</keyword>
<keyword id="KW-0822">Tryptophan biosynthesis</keyword>